<evidence type="ECO:0000255" key="1">
    <source>
        <dbReference type="HAMAP-Rule" id="MF_01553"/>
    </source>
</evidence>
<accession>B8DEA7</accession>
<dbReference type="EC" id="2.7.7.6" evidence="1"/>
<dbReference type="EMBL" id="CP001175">
    <property type="protein sequence ID" value="ACK39936.1"/>
    <property type="molecule type" value="Genomic_DNA"/>
</dbReference>
<dbReference type="RefSeq" id="WP_003722652.1">
    <property type="nucleotide sequence ID" value="NC_011660.1"/>
</dbReference>
<dbReference type="SMR" id="B8DEA7"/>
<dbReference type="KEGG" id="lmh:LMHCC_1593"/>
<dbReference type="HOGENOM" id="CLU_187518_0_0_9"/>
<dbReference type="GO" id="GO:0000428">
    <property type="term" value="C:DNA-directed RNA polymerase complex"/>
    <property type="evidence" value="ECO:0007669"/>
    <property type="project" value="UniProtKB-KW"/>
</dbReference>
<dbReference type="GO" id="GO:0003677">
    <property type="term" value="F:DNA binding"/>
    <property type="evidence" value="ECO:0007669"/>
    <property type="project" value="UniProtKB-UniRule"/>
</dbReference>
<dbReference type="GO" id="GO:0003899">
    <property type="term" value="F:DNA-directed RNA polymerase activity"/>
    <property type="evidence" value="ECO:0007669"/>
    <property type="project" value="UniProtKB-UniRule"/>
</dbReference>
<dbReference type="GO" id="GO:0006351">
    <property type="term" value="P:DNA-templated transcription"/>
    <property type="evidence" value="ECO:0007669"/>
    <property type="project" value="UniProtKB-UniRule"/>
</dbReference>
<dbReference type="Gene3D" id="3.10.20.730">
    <property type="entry name" value="RNAP, epsilon subunit-like"/>
    <property type="match status" value="1"/>
</dbReference>
<dbReference type="HAMAP" id="MF_01553">
    <property type="entry name" value="RNApol_bact_RpoY"/>
    <property type="match status" value="1"/>
</dbReference>
<dbReference type="InterPro" id="IPR009907">
    <property type="entry name" value="RpoY"/>
</dbReference>
<dbReference type="NCBIfam" id="NF010188">
    <property type="entry name" value="PRK13667.1"/>
    <property type="match status" value="1"/>
</dbReference>
<dbReference type="Pfam" id="PF07288">
    <property type="entry name" value="RpoY"/>
    <property type="match status" value="1"/>
</dbReference>
<gene>
    <name evidence="1" type="primary">rpoY</name>
    <name type="ordered locus">LMHCC_1593</name>
</gene>
<keyword id="KW-0240">DNA-directed RNA polymerase</keyword>
<keyword id="KW-0548">Nucleotidyltransferase</keyword>
<keyword id="KW-0804">Transcription</keyword>
<keyword id="KW-0808">Transferase</keyword>
<comment type="function">
    <text evidence="1">A non-essential component of RNA polymerase (RNAP).</text>
</comment>
<comment type="catalytic activity">
    <reaction evidence="1">
        <text>RNA(n) + a ribonucleoside 5'-triphosphate = RNA(n+1) + diphosphate</text>
        <dbReference type="Rhea" id="RHEA:21248"/>
        <dbReference type="Rhea" id="RHEA-COMP:14527"/>
        <dbReference type="Rhea" id="RHEA-COMP:17342"/>
        <dbReference type="ChEBI" id="CHEBI:33019"/>
        <dbReference type="ChEBI" id="CHEBI:61557"/>
        <dbReference type="ChEBI" id="CHEBI:140395"/>
        <dbReference type="EC" id="2.7.7.6"/>
    </reaction>
</comment>
<comment type="subunit">
    <text evidence="1">RNAP is composed of a core of 2 alpha, a beta and a beta' subunit. The core is associated with a delta subunit, and at least one of epsilon or omega. When a sigma factor is associated with the core the holoenzyme is formed, which can initiate transcription.</text>
</comment>
<comment type="similarity">
    <text evidence="1">Belongs to the RNA polymerase subunit epsilon family.</text>
</comment>
<name>RPOY_LISMH</name>
<proteinExistence type="inferred from homology"/>
<organism>
    <name type="scientific">Listeria monocytogenes serotype 4a (strain HCC23)</name>
    <dbReference type="NCBI Taxonomy" id="552536"/>
    <lineage>
        <taxon>Bacteria</taxon>
        <taxon>Bacillati</taxon>
        <taxon>Bacillota</taxon>
        <taxon>Bacilli</taxon>
        <taxon>Bacillales</taxon>
        <taxon>Listeriaceae</taxon>
        <taxon>Listeria</taxon>
    </lineage>
</organism>
<feature type="chain" id="PRO_1000185334" description="DNA-directed RNA polymerase subunit epsilon">
    <location>
        <begin position="1"/>
        <end position="69"/>
    </location>
</feature>
<sequence>MIFKVFYQETLTETPVREKTQSLYVEAESEVKVRQLLKDEPFHIEFVEKISDAHLAYEKENPDFALWEK</sequence>
<protein>
    <recommendedName>
        <fullName evidence="1">DNA-directed RNA polymerase subunit epsilon</fullName>
        <shortName evidence="1">RNAP epsilon subunit</shortName>
        <ecNumber evidence="1">2.7.7.6</ecNumber>
    </recommendedName>
    <alternativeName>
        <fullName evidence="1">RNA polymerase epsilon subunit</fullName>
    </alternativeName>
    <alternativeName>
        <fullName evidence="1">Transcriptase subunit epsilon</fullName>
    </alternativeName>
</protein>
<reference key="1">
    <citation type="journal article" date="2011" name="J. Bacteriol.">
        <title>Genome sequence of lineage III Listeria monocytogenes strain HCC23.</title>
        <authorList>
            <person name="Steele C.L."/>
            <person name="Donaldson J.R."/>
            <person name="Paul D."/>
            <person name="Banes M.M."/>
            <person name="Arick T."/>
            <person name="Bridges S.M."/>
            <person name="Lawrence M.L."/>
        </authorList>
    </citation>
    <scope>NUCLEOTIDE SEQUENCE [LARGE SCALE GENOMIC DNA]</scope>
    <source>
        <strain>HCC23</strain>
    </source>
</reference>